<proteinExistence type="inferred from homology"/>
<comment type="function">
    <text evidence="1">Component of the eukaryotic translation initiation factor 3 (eIF-3) complex, which is involved in protein synthesis of a specialized repertoire of mRNAs and, together with other initiation factors, stimulates binding of mRNA and methionyl-tRNAi to the 40S ribosome. The eIF-3 complex specifically targets and initiates translation of a subset of mRNAs involved in cell proliferation.</text>
</comment>
<comment type="subunit">
    <text evidence="1">Component of the eukaryotic translation initiation factor 3 (eIF-3) complex.</text>
</comment>
<comment type="subcellular location">
    <subcellularLocation>
        <location evidence="1">Cytoplasm</location>
    </subcellularLocation>
</comment>
<comment type="similarity">
    <text evidence="1">Belongs to the eIF-3 subunit M family.</text>
</comment>
<accession>P0CM90</accession>
<accession>Q55ZL7</accession>
<accession>Q5KNY0</accession>
<name>EIF3M_CRYNJ</name>
<dbReference type="EMBL" id="AE017341">
    <property type="protein sequence ID" value="AAW41113.1"/>
    <property type="molecule type" value="Genomic_DNA"/>
</dbReference>
<dbReference type="RefSeq" id="XP_566932.1">
    <property type="nucleotide sequence ID" value="XM_566932.2"/>
</dbReference>
<dbReference type="SMR" id="P0CM90"/>
<dbReference type="FunCoup" id="P0CM90">
    <property type="interactions" value="624"/>
</dbReference>
<dbReference type="STRING" id="214684.P0CM90"/>
<dbReference type="PaxDb" id="214684-P0CM90"/>
<dbReference type="EnsemblFungi" id="AAW41113">
    <property type="protein sequence ID" value="AAW41113"/>
    <property type="gene ID" value="CNA04920"/>
</dbReference>
<dbReference type="GeneID" id="3253281"/>
<dbReference type="KEGG" id="cne:CNA04920"/>
<dbReference type="VEuPathDB" id="FungiDB:CNA04920"/>
<dbReference type="eggNOG" id="KOG2753">
    <property type="taxonomic scope" value="Eukaryota"/>
</dbReference>
<dbReference type="HOGENOM" id="CLU_035254_3_0_1"/>
<dbReference type="InParanoid" id="P0CM90"/>
<dbReference type="OMA" id="FNDEHKG"/>
<dbReference type="OrthoDB" id="10267031at2759"/>
<dbReference type="Proteomes" id="UP000002149">
    <property type="component" value="Chromosome 1"/>
</dbReference>
<dbReference type="GO" id="GO:0016282">
    <property type="term" value="C:eukaryotic 43S preinitiation complex"/>
    <property type="evidence" value="ECO:0007669"/>
    <property type="project" value="UniProtKB-UniRule"/>
</dbReference>
<dbReference type="GO" id="GO:0033290">
    <property type="term" value="C:eukaryotic 48S preinitiation complex"/>
    <property type="evidence" value="ECO:0007669"/>
    <property type="project" value="UniProtKB-UniRule"/>
</dbReference>
<dbReference type="GO" id="GO:0005852">
    <property type="term" value="C:eukaryotic translation initiation factor 3 complex"/>
    <property type="evidence" value="ECO:0000318"/>
    <property type="project" value="GO_Central"/>
</dbReference>
<dbReference type="GO" id="GO:0071541">
    <property type="term" value="C:eukaryotic translation initiation factor 3 complex, eIF3m"/>
    <property type="evidence" value="ECO:0007669"/>
    <property type="project" value="UniProtKB-UniRule"/>
</dbReference>
<dbReference type="GO" id="GO:0003743">
    <property type="term" value="F:translation initiation factor activity"/>
    <property type="evidence" value="ECO:0007669"/>
    <property type="project" value="UniProtKB-UniRule"/>
</dbReference>
<dbReference type="GO" id="GO:0002183">
    <property type="term" value="P:cytoplasmic translational initiation"/>
    <property type="evidence" value="ECO:0000318"/>
    <property type="project" value="GO_Central"/>
</dbReference>
<dbReference type="GO" id="GO:0001732">
    <property type="term" value="P:formation of cytoplasmic translation initiation complex"/>
    <property type="evidence" value="ECO:0007669"/>
    <property type="project" value="UniProtKB-UniRule"/>
</dbReference>
<dbReference type="HAMAP" id="MF_03012">
    <property type="entry name" value="eIF3m"/>
    <property type="match status" value="1"/>
</dbReference>
<dbReference type="InterPro" id="IPR045237">
    <property type="entry name" value="COPS7/eIF3m"/>
</dbReference>
<dbReference type="InterPro" id="IPR027528">
    <property type="entry name" value="eIF3m"/>
</dbReference>
<dbReference type="InterPro" id="IPR040750">
    <property type="entry name" value="eIF3m_C_helix"/>
</dbReference>
<dbReference type="InterPro" id="IPR000717">
    <property type="entry name" value="PCI_dom"/>
</dbReference>
<dbReference type="PANTHER" id="PTHR15350">
    <property type="entry name" value="COP9 SIGNALOSOME COMPLEX SUBUNIT 7/DENDRITIC CELL PROTEIN GA17"/>
    <property type="match status" value="1"/>
</dbReference>
<dbReference type="PANTHER" id="PTHR15350:SF2">
    <property type="entry name" value="EUKARYOTIC TRANSLATION INITIATION FACTOR 3 SUBUNIT M"/>
    <property type="match status" value="1"/>
</dbReference>
<dbReference type="Pfam" id="PF18005">
    <property type="entry name" value="eIF3m_C_helix"/>
    <property type="match status" value="1"/>
</dbReference>
<dbReference type="Pfam" id="PF01399">
    <property type="entry name" value="PCI"/>
    <property type="match status" value="1"/>
</dbReference>
<dbReference type="SMART" id="SM00088">
    <property type="entry name" value="PINT"/>
    <property type="match status" value="1"/>
</dbReference>
<dbReference type="PROSITE" id="PS50250">
    <property type="entry name" value="PCI"/>
    <property type="match status" value="1"/>
</dbReference>
<organism>
    <name type="scientific">Cryptococcus neoformans var. neoformans serotype D (strain JEC21 / ATCC MYA-565)</name>
    <name type="common">Filobasidiella neoformans</name>
    <dbReference type="NCBI Taxonomy" id="214684"/>
    <lineage>
        <taxon>Eukaryota</taxon>
        <taxon>Fungi</taxon>
        <taxon>Dikarya</taxon>
        <taxon>Basidiomycota</taxon>
        <taxon>Agaricomycotina</taxon>
        <taxon>Tremellomycetes</taxon>
        <taxon>Tremellales</taxon>
        <taxon>Cryptococcaceae</taxon>
        <taxon>Cryptococcus</taxon>
        <taxon>Cryptococcus neoformans species complex</taxon>
    </lineage>
</organism>
<keyword id="KW-0963">Cytoplasm</keyword>
<keyword id="KW-0396">Initiation factor</keyword>
<keyword id="KW-0648">Protein biosynthesis</keyword>
<keyword id="KW-1185">Reference proteome</keyword>
<sequence length="443" mass="48662">MADCITIAPELSFKDQITELAAHLSRSLPNADNQVAVKEFVQGYEAQVDTEEGRGDVEDAKKKQVVKSIVDKFVELKGGLEAAKESEVESSHFLLQHVLSTTFDQASEEYAQAVKDVNEAVKKGAQETTKITRAEAASRVLKNTYNFLPSNSPIRPSTLLSLMSLLASTLDLSALPLPTSTLLPALSSWSIPSSEKVSFLTTASGLYQSTGNLAKALELLTLALKESVEPTVVERAVLLALAVPNKFELDDVLAVQGVKEQLGKVQGVVELFEGDEVEAIEKGKKWTAENVSLIEGAGIPGFTSETVLRKLRLIALVALCTKSETRQLEYAPIAKALAIEESEVETWVIDAVRSKLIVARISQPQSLIRIHSISSITASSRRFGPSEWQLLEKRLEQWKKSVNEARQVVEEAETVAQQGLGQQRRGGKRREEKKEKEDKEEQE</sequence>
<evidence type="ECO:0000255" key="1">
    <source>
        <dbReference type="HAMAP-Rule" id="MF_03012"/>
    </source>
</evidence>
<evidence type="ECO:0000255" key="2">
    <source>
        <dbReference type="PROSITE-ProRule" id="PRU01185"/>
    </source>
</evidence>
<evidence type="ECO:0000256" key="3">
    <source>
        <dbReference type="SAM" id="MobiDB-lite"/>
    </source>
</evidence>
<reference key="1">
    <citation type="journal article" date="2005" name="Science">
        <title>The genome of the basidiomycetous yeast and human pathogen Cryptococcus neoformans.</title>
        <authorList>
            <person name="Loftus B.J."/>
            <person name="Fung E."/>
            <person name="Roncaglia P."/>
            <person name="Rowley D."/>
            <person name="Amedeo P."/>
            <person name="Bruno D."/>
            <person name="Vamathevan J."/>
            <person name="Miranda M."/>
            <person name="Anderson I.J."/>
            <person name="Fraser J.A."/>
            <person name="Allen J.E."/>
            <person name="Bosdet I.E."/>
            <person name="Brent M.R."/>
            <person name="Chiu R."/>
            <person name="Doering T.L."/>
            <person name="Donlin M.J."/>
            <person name="D'Souza C.A."/>
            <person name="Fox D.S."/>
            <person name="Grinberg V."/>
            <person name="Fu J."/>
            <person name="Fukushima M."/>
            <person name="Haas B.J."/>
            <person name="Huang J.C."/>
            <person name="Janbon G."/>
            <person name="Jones S.J.M."/>
            <person name="Koo H.L."/>
            <person name="Krzywinski M.I."/>
            <person name="Kwon-Chung K.J."/>
            <person name="Lengeler K.B."/>
            <person name="Maiti R."/>
            <person name="Marra M.A."/>
            <person name="Marra R.E."/>
            <person name="Mathewson C.A."/>
            <person name="Mitchell T.G."/>
            <person name="Pertea M."/>
            <person name="Riggs F.R."/>
            <person name="Salzberg S.L."/>
            <person name="Schein J.E."/>
            <person name="Shvartsbeyn A."/>
            <person name="Shin H."/>
            <person name="Shumway M."/>
            <person name="Specht C.A."/>
            <person name="Suh B.B."/>
            <person name="Tenney A."/>
            <person name="Utterback T.R."/>
            <person name="Wickes B.L."/>
            <person name="Wortman J.R."/>
            <person name="Wye N.H."/>
            <person name="Kronstad J.W."/>
            <person name="Lodge J.K."/>
            <person name="Heitman J."/>
            <person name="Davis R.W."/>
            <person name="Fraser C.M."/>
            <person name="Hyman R.W."/>
        </authorList>
    </citation>
    <scope>NUCLEOTIDE SEQUENCE [LARGE SCALE GENOMIC DNA]</scope>
    <source>
        <strain>JEC21 / ATCC MYA-565</strain>
    </source>
</reference>
<gene>
    <name type="ordered locus">CNA04920</name>
</gene>
<protein>
    <recommendedName>
        <fullName evidence="1">Eukaryotic translation initiation factor 3 subunit M</fullName>
        <shortName evidence="1">eIF3m</shortName>
    </recommendedName>
</protein>
<feature type="chain" id="PRO_0000366018" description="Eukaryotic translation initiation factor 3 subunit M">
    <location>
        <begin position="1"/>
        <end position="443"/>
    </location>
</feature>
<feature type="domain" description="PCI" evidence="2">
    <location>
        <begin position="205"/>
        <end position="375"/>
    </location>
</feature>
<feature type="region of interest" description="Disordered" evidence="3">
    <location>
        <begin position="413"/>
        <end position="443"/>
    </location>
</feature>
<feature type="compositionally biased region" description="Basic and acidic residues" evidence="3">
    <location>
        <begin position="429"/>
        <end position="443"/>
    </location>
</feature>